<organism>
    <name type="scientific">Haloquadratum walsbyi (strain DSM 16790 / HBSQ001)</name>
    <dbReference type="NCBI Taxonomy" id="362976"/>
    <lineage>
        <taxon>Archaea</taxon>
        <taxon>Methanobacteriati</taxon>
        <taxon>Methanobacteriota</taxon>
        <taxon>Stenosarchaea group</taxon>
        <taxon>Halobacteria</taxon>
        <taxon>Halobacteriales</taxon>
        <taxon>Haloferacaceae</taxon>
        <taxon>Haloquadratum</taxon>
    </lineage>
</organism>
<accession>Q18EV0</accession>
<protein>
    <recommendedName>
        <fullName evidence="1">Prefoldin subunit alpha</fullName>
    </recommendedName>
    <alternativeName>
        <fullName evidence="1">GimC subunit alpha</fullName>
    </alternativeName>
</protein>
<keyword id="KW-0143">Chaperone</keyword>
<keyword id="KW-0963">Cytoplasm</keyword>
<keyword id="KW-1185">Reference proteome</keyword>
<proteinExistence type="inferred from homology"/>
<evidence type="ECO:0000255" key="1">
    <source>
        <dbReference type="HAMAP-Rule" id="MF_00308"/>
    </source>
</evidence>
<evidence type="ECO:0000256" key="2">
    <source>
        <dbReference type="SAM" id="MobiDB-lite"/>
    </source>
</evidence>
<evidence type="ECO:0000305" key="3"/>
<name>PFDA_HALWD</name>
<reference key="1">
    <citation type="journal article" date="2006" name="BMC Genomics">
        <title>The genome of the square archaeon Haloquadratum walsbyi: life at the limits of water activity.</title>
        <authorList>
            <person name="Bolhuis H."/>
            <person name="Palm P."/>
            <person name="Wende A."/>
            <person name="Falb M."/>
            <person name="Rampp M."/>
            <person name="Rodriguez-Valera F."/>
            <person name="Pfeiffer F."/>
            <person name="Oesterhelt D."/>
        </authorList>
    </citation>
    <scope>NUCLEOTIDE SEQUENCE [LARGE SCALE GENOMIC DNA]</scope>
    <source>
        <strain>DSM 16790 / HBSQ001</strain>
    </source>
</reference>
<dbReference type="EMBL" id="AM180088">
    <property type="protein sequence ID" value="CAJ53517.1"/>
    <property type="molecule type" value="Genomic_DNA"/>
</dbReference>
<dbReference type="RefSeq" id="WP_011572614.1">
    <property type="nucleotide sequence ID" value="NC_008212.1"/>
</dbReference>
<dbReference type="SMR" id="Q18EV0"/>
<dbReference type="STRING" id="362976.HQ_3420A"/>
<dbReference type="GeneID" id="4194425"/>
<dbReference type="KEGG" id="hwa:HQ_3420A"/>
<dbReference type="eggNOG" id="arCOG01341">
    <property type="taxonomic scope" value="Archaea"/>
</dbReference>
<dbReference type="HOGENOM" id="CLU_091867_1_3_2"/>
<dbReference type="Proteomes" id="UP000001975">
    <property type="component" value="Chromosome"/>
</dbReference>
<dbReference type="GO" id="GO:0005737">
    <property type="term" value="C:cytoplasm"/>
    <property type="evidence" value="ECO:0007669"/>
    <property type="project" value="UniProtKB-SubCell"/>
</dbReference>
<dbReference type="GO" id="GO:0016272">
    <property type="term" value="C:prefoldin complex"/>
    <property type="evidence" value="ECO:0007669"/>
    <property type="project" value="UniProtKB-UniRule"/>
</dbReference>
<dbReference type="GO" id="GO:0051082">
    <property type="term" value="F:unfolded protein binding"/>
    <property type="evidence" value="ECO:0007669"/>
    <property type="project" value="UniProtKB-UniRule"/>
</dbReference>
<dbReference type="GO" id="GO:0006457">
    <property type="term" value="P:protein folding"/>
    <property type="evidence" value="ECO:0007669"/>
    <property type="project" value="UniProtKB-UniRule"/>
</dbReference>
<dbReference type="CDD" id="cd00584">
    <property type="entry name" value="Prefoldin_alpha"/>
    <property type="match status" value="1"/>
</dbReference>
<dbReference type="Gene3D" id="1.10.287.370">
    <property type="match status" value="1"/>
</dbReference>
<dbReference type="HAMAP" id="MF_00308">
    <property type="entry name" value="PfdA"/>
    <property type="match status" value="1"/>
</dbReference>
<dbReference type="InterPro" id="IPR011599">
    <property type="entry name" value="PFD_alpha_archaea"/>
</dbReference>
<dbReference type="InterPro" id="IPR009053">
    <property type="entry name" value="Prefoldin"/>
</dbReference>
<dbReference type="InterPro" id="IPR004127">
    <property type="entry name" value="Prefoldin_subunit_alpha"/>
</dbReference>
<dbReference type="NCBIfam" id="TIGR00293">
    <property type="entry name" value="prefoldin subunit alpha"/>
    <property type="match status" value="1"/>
</dbReference>
<dbReference type="PANTHER" id="PTHR12674">
    <property type="entry name" value="PREFOLDIN SUBUNIT 5"/>
    <property type="match status" value="1"/>
</dbReference>
<dbReference type="PANTHER" id="PTHR12674:SF2">
    <property type="entry name" value="PREFOLDIN SUBUNIT 5"/>
    <property type="match status" value="1"/>
</dbReference>
<dbReference type="Pfam" id="PF02996">
    <property type="entry name" value="Prefoldin"/>
    <property type="match status" value="1"/>
</dbReference>
<dbReference type="SUPFAM" id="SSF46579">
    <property type="entry name" value="Prefoldin"/>
    <property type="match status" value="1"/>
</dbReference>
<sequence>MMGGGQQQQLQQLSEELQAIDEEIDELREEVDDLQSEQTSIDEAMDAIQTLESGATVQVPLGGDAYVRAEIQDADEIIVGLGADFAAEQSADNAVESLSTKQDALDNRIESLRDDIDELETESSQLEQQAQQMQQQMQQQQMQQMQDQQPEDNE</sequence>
<gene>
    <name evidence="1" type="primary">pfdA</name>
    <name type="ordered locus">HQ_3420A</name>
</gene>
<comment type="function">
    <text evidence="1">Molecular chaperone capable of stabilizing a range of proteins. Seems to fulfill an ATP-independent, HSP70-like function in archaeal de novo protein folding.</text>
</comment>
<comment type="subunit">
    <text evidence="1">Heterohexamer of two alpha and four beta subunits.</text>
</comment>
<comment type="subcellular location">
    <subcellularLocation>
        <location evidence="1">Cytoplasm</location>
    </subcellularLocation>
</comment>
<comment type="similarity">
    <text evidence="3">Belongs to the prefoldin subunit alpha family.</text>
</comment>
<feature type="chain" id="PRO_0000300762" description="Prefoldin subunit alpha">
    <location>
        <begin position="1"/>
        <end position="154"/>
    </location>
</feature>
<feature type="region of interest" description="Disordered" evidence="2">
    <location>
        <begin position="92"/>
        <end position="154"/>
    </location>
</feature>
<feature type="compositionally biased region" description="Polar residues" evidence="2">
    <location>
        <begin position="92"/>
        <end position="102"/>
    </location>
</feature>
<feature type="compositionally biased region" description="Basic and acidic residues" evidence="2">
    <location>
        <begin position="103"/>
        <end position="114"/>
    </location>
</feature>
<feature type="compositionally biased region" description="Low complexity" evidence="2">
    <location>
        <begin position="128"/>
        <end position="148"/>
    </location>
</feature>